<gene>
    <name evidence="1" type="primary">recR</name>
    <name type="ordered locus">plu3839</name>
</gene>
<reference key="1">
    <citation type="journal article" date="2003" name="Nat. Biotechnol.">
        <title>The genome sequence of the entomopathogenic bacterium Photorhabdus luminescens.</title>
        <authorList>
            <person name="Duchaud E."/>
            <person name="Rusniok C."/>
            <person name="Frangeul L."/>
            <person name="Buchrieser C."/>
            <person name="Givaudan A."/>
            <person name="Taourit S."/>
            <person name="Bocs S."/>
            <person name="Boursaux-Eude C."/>
            <person name="Chandler M."/>
            <person name="Charles J.-F."/>
            <person name="Dassa E."/>
            <person name="Derose R."/>
            <person name="Derzelle S."/>
            <person name="Freyssinet G."/>
            <person name="Gaudriault S."/>
            <person name="Medigue C."/>
            <person name="Lanois A."/>
            <person name="Powell K."/>
            <person name="Siguier P."/>
            <person name="Vincent R."/>
            <person name="Wingate V."/>
            <person name="Zouine M."/>
            <person name="Glaser P."/>
            <person name="Boemare N."/>
            <person name="Danchin A."/>
            <person name="Kunst F."/>
        </authorList>
    </citation>
    <scope>NUCLEOTIDE SEQUENCE [LARGE SCALE GENOMIC DNA]</scope>
    <source>
        <strain>DSM 15139 / CIP 105565 / TT01</strain>
    </source>
</reference>
<name>RECR_PHOLL</name>
<keyword id="KW-0227">DNA damage</keyword>
<keyword id="KW-0233">DNA recombination</keyword>
<keyword id="KW-0234">DNA repair</keyword>
<keyword id="KW-0479">Metal-binding</keyword>
<keyword id="KW-1185">Reference proteome</keyword>
<keyword id="KW-0862">Zinc</keyword>
<keyword id="KW-0863">Zinc-finger</keyword>
<protein>
    <recommendedName>
        <fullName evidence="1">Recombination protein RecR</fullName>
    </recommendedName>
</protein>
<sequence>MQTSPLLESLMEALRCLPGVGPKSAQRMAFHLLQRNRSGGMRLAQALTRAMSEIGHCKYCRTFTEQEQCTICANPRRQQNGQICVVESPADIHAIEQTGQFAGRYFVLMGHLSPLDGIGPMDIGLDRLEDRLATEEISEVILATNPTVEGEATANYIAEICVQYGVTASRIAHGVPVGGELEMVDGTTLSHSLAGRQKITY</sequence>
<organism>
    <name type="scientific">Photorhabdus laumondii subsp. laumondii (strain DSM 15139 / CIP 105565 / TT01)</name>
    <name type="common">Photorhabdus luminescens subsp. laumondii</name>
    <dbReference type="NCBI Taxonomy" id="243265"/>
    <lineage>
        <taxon>Bacteria</taxon>
        <taxon>Pseudomonadati</taxon>
        <taxon>Pseudomonadota</taxon>
        <taxon>Gammaproteobacteria</taxon>
        <taxon>Enterobacterales</taxon>
        <taxon>Morganellaceae</taxon>
        <taxon>Photorhabdus</taxon>
    </lineage>
</organism>
<evidence type="ECO:0000255" key="1">
    <source>
        <dbReference type="HAMAP-Rule" id="MF_00017"/>
    </source>
</evidence>
<proteinExistence type="inferred from homology"/>
<comment type="function">
    <text evidence="1">May play a role in DNA repair. It seems to be involved in an RecBC-independent recombinational process of DNA repair. It may act with RecF and RecO.</text>
</comment>
<comment type="similarity">
    <text evidence="1">Belongs to the RecR family.</text>
</comment>
<accession>Q7N0P2</accession>
<dbReference type="EMBL" id="BX571871">
    <property type="protein sequence ID" value="CAE16211.1"/>
    <property type="molecule type" value="Genomic_DNA"/>
</dbReference>
<dbReference type="RefSeq" id="WP_011147978.1">
    <property type="nucleotide sequence ID" value="NC_005126.1"/>
</dbReference>
<dbReference type="SMR" id="Q7N0P2"/>
<dbReference type="STRING" id="243265.plu3839"/>
<dbReference type="GeneID" id="48850069"/>
<dbReference type="KEGG" id="plu:plu3839"/>
<dbReference type="eggNOG" id="COG0353">
    <property type="taxonomic scope" value="Bacteria"/>
</dbReference>
<dbReference type="HOGENOM" id="CLU_060739_1_2_6"/>
<dbReference type="OrthoDB" id="9802672at2"/>
<dbReference type="Proteomes" id="UP000002514">
    <property type="component" value="Chromosome"/>
</dbReference>
<dbReference type="GO" id="GO:0003677">
    <property type="term" value="F:DNA binding"/>
    <property type="evidence" value="ECO:0007669"/>
    <property type="project" value="UniProtKB-UniRule"/>
</dbReference>
<dbReference type="GO" id="GO:0008270">
    <property type="term" value="F:zinc ion binding"/>
    <property type="evidence" value="ECO:0007669"/>
    <property type="project" value="UniProtKB-KW"/>
</dbReference>
<dbReference type="GO" id="GO:0006310">
    <property type="term" value="P:DNA recombination"/>
    <property type="evidence" value="ECO:0007669"/>
    <property type="project" value="UniProtKB-UniRule"/>
</dbReference>
<dbReference type="GO" id="GO:0006281">
    <property type="term" value="P:DNA repair"/>
    <property type="evidence" value="ECO:0007669"/>
    <property type="project" value="UniProtKB-UniRule"/>
</dbReference>
<dbReference type="CDD" id="cd01025">
    <property type="entry name" value="TOPRIM_recR"/>
    <property type="match status" value="1"/>
</dbReference>
<dbReference type="FunFam" id="1.10.8.420:FF:000001">
    <property type="entry name" value="Recombination protein RecR"/>
    <property type="match status" value="1"/>
</dbReference>
<dbReference type="FunFam" id="3.40.1360.10:FF:000001">
    <property type="entry name" value="Recombination protein RecR"/>
    <property type="match status" value="1"/>
</dbReference>
<dbReference type="Gene3D" id="3.30.60.80">
    <property type="match status" value="1"/>
</dbReference>
<dbReference type="Gene3D" id="3.40.1360.10">
    <property type="match status" value="1"/>
</dbReference>
<dbReference type="Gene3D" id="6.10.250.240">
    <property type="match status" value="1"/>
</dbReference>
<dbReference type="Gene3D" id="1.10.8.420">
    <property type="entry name" value="RecR Domain 1"/>
    <property type="match status" value="1"/>
</dbReference>
<dbReference type="HAMAP" id="MF_00017">
    <property type="entry name" value="RecR"/>
    <property type="match status" value="1"/>
</dbReference>
<dbReference type="InterPro" id="IPR000093">
    <property type="entry name" value="DNA_Rcmb_RecR"/>
</dbReference>
<dbReference type="InterPro" id="IPR023627">
    <property type="entry name" value="Rcmb_RecR"/>
</dbReference>
<dbReference type="InterPro" id="IPR015967">
    <property type="entry name" value="Rcmb_RecR_Znf"/>
</dbReference>
<dbReference type="InterPro" id="IPR006171">
    <property type="entry name" value="TOPRIM_dom"/>
</dbReference>
<dbReference type="InterPro" id="IPR034137">
    <property type="entry name" value="TOPRIM_RecR"/>
</dbReference>
<dbReference type="NCBIfam" id="TIGR00615">
    <property type="entry name" value="recR"/>
    <property type="match status" value="1"/>
</dbReference>
<dbReference type="PANTHER" id="PTHR30446">
    <property type="entry name" value="RECOMBINATION PROTEIN RECR"/>
    <property type="match status" value="1"/>
</dbReference>
<dbReference type="PANTHER" id="PTHR30446:SF0">
    <property type="entry name" value="RECOMBINATION PROTEIN RECR"/>
    <property type="match status" value="1"/>
</dbReference>
<dbReference type="Pfam" id="PF21175">
    <property type="entry name" value="RecR_C"/>
    <property type="match status" value="1"/>
</dbReference>
<dbReference type="Pfam" id="PF21176">
    <property type="entry name" value="RecR_HhH"/>
    <property type="match status" value="1"/>
</dbReference>
<dbReference type="Pfam" id="PF02132">
    <property type="entry name" value="RecR_ZnF"/>
    <property type="match status" value="1"/>
</dbReference>
<dbReference type="Pfam" id="PF13662">
    <property type="entry name" value="Toprim_4"/>
    <property type="match status" value="1"/>
</dbReference>
<dbReference type="SMART" id="SM00493">
    <property type="entry name" value="TOPRIM"/>
    <property type="match status" value="1"/>
</dbReference>
<dbReference type="SUPFAM" id="SSF111304">
    <property type="entry name" value="Recombination protein RecR"/>
    <property type="match status" value="1"/>
</dbReference>
<dbReference type="PROSITE" id="PS01300">
    <property type="entry name" value="RECR"/>
    <property type="match status" value="1"/>
</dbReference>
<dbReference type="PROSITE" id="PS50880">
    <property type="entry name" value="TOPRIM"/>
    <property type="match status" value="1"/>
</dbReference>
<feature type="chain" id="PRO_0000190360" description="Recombination protein RecR">
    <location>
        <begin position="1"/>
        <end position="201"/>
    </location>
</feature>
<feature type="domain" description="Toprim" evidence="1">
    <location>
        <begin position="81"/>
        <end position="176"/>
    </location>
</feature>
<feature type="zinc finger region" description="C4-type" evidence="1">
    <location>
        <begin position="57"/>
        <end position="72"/>
    </location>
</feature>